<organism>
    <name type="scientific">Acidothermus cellulolyticus (strain ATCC 43068 / DSM 8971 / 11B)</name>
    <dbReference type="NCBI Taxonomy" id="351607"/>
    <lineage>
        <taxon>Bacteria</taxon>
        <taxon>Bacillati</taxon>
        <taxon>Actinomycetota</taxon>
        <taxon>Actinomycetes</taxon>
        <taxon>Acidothermales</taxon>
        <taxon>Acidothermaceae</taxon>
        <taxon>Acidothermus</taxon>
    </lineage>
</organism>
<evidence type="ECO:0000255" key="1">
    <source>
        <dbReference type="HAMAP-Rule" id="MF_00122"/>
    </source>
</evidence>
<feature type="chain" id="PRO_1000016058" description="Aspartyl/glutamyl-tRNA(Asn/Gln) amidotransferase subunit C">
    <location>
        <begin position="1"/>
        <end position="98"/>
    </location>
</feature>
<name>GATC_ACIC1</name>
<sequence length="98" mass="10695">MPRVTRADVAHLARLSRLALTEAELDRFAGQLDVILDAVAKVSSVAGSDVRPTSHPLPLTNVYRDDEVRPSLPVGEVLAAAPAVEDQRFKVPRILEEE</sequence>
<protein>
    <recommendedName>
        <fullName evidence="1">Aspartyl/glutamyl-tRNA(Asn/Gln) amidotransferase subunit C</fullName>
        <shortName evidence="1">Asp/Glu-ADT subunit C</shortName>
        <ecNumber evidence="1">6.3.5.-</ecNumber>
    </recommendedName>
</protein>
<comment type="function">
    <text evidence="1">Allows the formation of correctly charged Asn-tRNA(Asn) or Gln-tRNA(Gln) through the transamidation of misacylated Asp-tRNA(Asn) or Glu-tRNA(Gln) in organisms which lack either or both of asparaginyl-tRNA or glutaminyl-tRNA synthetases. The reaction takes place in the presence of glutamine and ATP through an activated phospho-Asp-tRNA(Asn) or phospho-Glu-tRNA(Gln).</text>
</comment>
<comment type="catalytic activity">
    <reaction evidence="1">
        <text>L-glutamyl-tRNA(Gln) + L-glutamine + ATP + H2O = L-glutaminyl-tRNA(Gln) + L-glutamate + ADP + phosphate + H(+)</text>
        <dbReference type="Rhea" id="RHEA:17521"/>
        <dbReference type="Rhea" id="RHEA-COMP:9681"/>
        <dbReference type="Rhea" id="RHEA-COMP:9684"/>
        <dbReference type="ChEBI" id="CHEBI:15377"/>
        <dbReference type="ChEBI" id="CHEBI:15378"/>
        <dbReference type="ChEBI" id="CHEBI:29985"/>
        <dbReference type="ChEBI" id="CHEBI:30616"/>
        <dbReference type="ChEBI" id="CHEBI:43474"/>
        <dbReference type="ChEBI" id="CHEBI:58359"/>
        <dbReference type="ChEBI" id="CHEBI:78520"/>
        <dbReference type="ChEBI" id="CHEBI:78521"/>
        <dbReference type="ChEBI" id="CHEBI:456216"/>
    </reaction>
</comment>
<comment type="catalytic activity">
    <reaction evidence="1">
        <text>L-aspartyl-tRNA(Asn) + L-glutamine + ATP + H2O = L-asparaginyl-tRNA(Asn) + L-glutamate + ADP + phosphate + 2 H(+)</text>
        <dbReference type="Rhea" id="RHEA:14513"/>
        <dbReference type="Rhea" id="RHEA-COMP:9674"/>
        <dbReference type="Rhea" id="RHEA-COMP:9677"/>
        <dbReference type="ChEBI" id="CHEBI:15377"/>
        <dbReference type="ChEBI" id="CHEBI:15378"/>
        <dbReference type="ChEBI" id="CHEBI:29985"/>
        <dbReference type="ChEBI" id="CHEBI:30616"/>
        <dbReference type="ChEBI" id="CHEBI:43474"/>
        <dbReference type="ChEBI" id="CHEBI:58359"/>
        <dbReference type="ChEBI" id="CHEBI:78515"/>
        <dbReference type="ChEBI" id="CHEBI:78516"/>
        <dbReference type="ChEBI" id="CHEBI:456216"/>
    </reaction>
</comment>
<comment type="subunit">
    <text evidence="1">Heterotrimer of A, B and C subunits.</text>
</comment>
<comment type="similarity">
    <text evidence="1">Belongs to the GatC family.</text>
</comment>
<dbReference type="EC" id="6.3.5.-" evidence="1"/>
<dbReference type="EMBL" id="CP000481">
    <property type="protein sequence ID" value="ABK52469.1"/>
    <property type="molecule type" value="Genomic_DNA"/>
</dbReference>
<dbReference type="RefSeq" id="WP_011719532.1">
    <property type="nucleotide sequence ID" value="NC_008578.1"/>
</dbReference>
<dbReference type="SMR" id="A0LSQ9"/>
<dbReference type="FunCoup" id="A0LSQ9">
    <property type="interactions" value="72"/>
</dbReference>
<dbReference type="STRING" id="351607.Acel_0696"/>
<dbReference type="KEGG" id="ace:Acel_0696"/>
<dbReference type="eggNOG" id="COG0721">
    <property type="taxonomic scope" value="Bacteria"/>
</dbReference>
<dbReference type="HOGENOM" id="CLU_105899_1_0_11"/>
<dbReference type="InParanoid" id="A0LSQ9"/>
<dbReference type="OrthoDB" id="5295223at2"/>
<dbReference type="Proteomes" id="UP000008221">
    <property type="component" value="Chromosome"/>
</dbReference>
<dbReference type="GO" id="GO:0050566">
    <property type="term" value="F:asparaginyl-tRNA synthase (glutamine-hydrolyzing) activity"/>
    <property type="evidence" value="ECO:0007669"/>
    <property type="project" value="RHEA"/>
</dbReference>
<dbReference type="GO" id="GO:0005524">
    <property type="term" value="F:ATP binding"/>
    <property type="evidence" value="ECO:0007669"/>
    <property type="project" value="UniProtKB-KW"/>
</dbReference>
<dbReference type="GO" id="GO:0050567">
    <property type="term" value="F:glutaminyl-tRNA synthase (glutamine-hydrolyzing) activity"/>
    <property type="evidence" value="ECO:0007669"/>
    <property type="project" value="UniProtKB-UniRule"/>
</dbReference>
<dbReference type="GO" id="GO:0070681">
    <property type="term" value="P:glutaminyl-tRNAGln biosynthesis via transamidation"/>
    <property type="evidence" value="ECO:0007669"/>
    <property type="project" value="TreeGrafter"/>
</dbReference>
<dbReference type="GO" id="GO:0006450">
    <property type="term" value="P:regulation of translational fidelity"/>
    <property type="evidence" value="ECO:0007669"/>
    <property type="project" value="InterPro"/>
</dbReference>
<dbReference type="GO" id="GO:0006412">
    <property type="term" value="P:translation"/>
    <property type="evidence" value="ECO:0007669"/>
    <property type="project" value="UniProtKB-UniRule"/>
</dbReference>
<dbReference type="Gene3D" id="1.10.20.60">
    <property type="entry name" value="Glu-tRNAGln amidotransferase C subunit, N-terminal domain"/>
    <property type="match status" value="1"/>
</dbReference>
<dbReference type="HAMAP" id="MF_00122">
    <property type="entry name" value="GatC"/>
    <property type="match status" value="1"/>
</dbReference>
<dbReference type="InterPro" id="IPR036113">
    <property type="entry name" value="Asp/Glu-ADT_sf_sub_c"/>
</dbReference>
<dbReference type="InterPro" id="IPR003837">
    <property type="entry name" value="GatC"/>
</dbReference>
<dbReference type="NCBIfam" id="TIGR00135">
    <property type="entry name" value="gatC"/>
    <property type="match status" value="1"/>
</dbReference>
<dbReference type="PANTHER" id="PTHR15004">
    <property type="entry name" value="GLUTAMYL-TRNA(GLN) AMIDOTRANSFERASE SUBUNIT C, MITOCHONDRIAL"/>
    <property type="match status" value="1"/>
</dbReference>
<dbReference type="PANTHER" id="PTHR15004:SF0">
    <property type="entry name" value="GLUTAMYL-TRNA(GLN) AMIDOTRANSFERASE SUBUNIT C, MITOCHONDRIAL"/>
    <property type="match status" value="1"/>
</dbReference>
<dbReference type="Pfam" id="PF02686">
    <property type="entry name" value="GatC"/>
    <property type="match status" value="1"/>
</dbReference>
<dbReference type="SUPFAM" id="SSF141000">
    <property type="entry name" value="Glu-tRNAGln amidotransferase C subunit"/>
    <property type="match status" value="1"/>
</dbReference>
<keyword id="KW-0067">ATP-binding</keyword>
<keyword id="KW-0436">Ligase</keyword>
<keyword id="KW-0547">Nucleotide-binding</keyword>
<keyword id="KW-0648">Protein biosynthesis</keyword>
<keyword id="KW-1185">Reference proteome</keyword>
<gene>
    <name evidence="1" type="primary">gatC</name>
    <name type="ordered locus">Acel_0696</name>
</gene>
<proteinExistence type="inferred from homology"/>
<accession>A0LSQ9</accession>
<reference key="1">
    <citation type="journal article" date="2009" name="Genome Res.">
        <title>Complete genome of the cellulolytic thermophile Acidothermus cellulolyticus 11B provides insights into its ecophysiological and evolutionary adaptations.</title>
        <authorList>
            <person name="Barabote R.D."/>
            <person name="Xie G."/>
            <person name="Leu D.H."/>
            <person name="Normand P."/>
            <person name="Necsulea A."/>
            <person name="Daubin V."/>
            <person name="Medigue C."/>
            <person name="Adney W.S."/>
            <person name="Xu X.C."/>
            <person name="Lapidus A."/>
            <person name="Parales R.E."/>
            <person name="Detter C."/>
            <person name="Pujic P."/>
            <person name="Bruce D."/>
            <person name="Lavire C."/>
            <person name="Challacombe J.F."/>
            <person name="Brettin T.S."/>
            <person name="Berry A.M."/>
        </authorList>
    </citation>
    <scope>NUCLEOTIDE SEQUENCE [LARGE SCALE GENOMIC DNA]</scope>
    <source>
        <strain>ATCC 43068 / DSM 8971 / 11B</strain>
    </source>
</reference>